<evidence type="ECO:0000255" key="1">
    <source>
        <dbReference type="HAMAP-Rule" id="MF_00634"/>
    </source>
</evidence>
<dbReference type="EMBL" id="AM933173">
    <property type="protein sequence ID" value="CAR38801.1"/>
    <property type="molecule type" value="Genomic_DNA"/>
</dbReference>
<dbReference type="RefSeq" id="WP_001277205.1">
    <property type="nucleotide sequence ID" value="NC_011274.1"/>
</dbReference>
<dbReference type="SMR" id="B5RE62"/>
<dbReference type="KEGG" id="seg:SG2996"/>
<dbReference type="HOGENOM" id="CLU_130694_5_0_6"/>
<dbReference type="Proteomes" id="UP000008321">
    <property type="component" value="Chromosome"/>
</dbReference>
<dbReference type="GO" id="GO:0005737">
    <property type="term" value="C:cytoplasm"/>
    <property type="evidence" value="ECO:0007669"/>
    <property type="project" value="TreeGrafter"/>
</dbReference>
<dbReference type="Gene3D" id="3.30.1200.10">
    <property type="entry name" value="YggU-like"/>
    <property type="match status" value="1"/>
</dbReference>
<dbReference type="HAMAP" id="MF_00634">
    <property type="entry name" value="UPF0235"/>
    <property type="match status" value="1"/>
</dbReference>
<dbReference type="InterPro" id="IPR003746">
    <property type="entry name" value="DUF167"/>
</dbReference>
<dbReference type="InterPro" id="IPR036591">
    <property type="entry name" value="YggU-like_sf"/>
</dbReference>
<dbReference type="NCBIfam" id="TIGR00251">
    <property type="entry name" value="DUF167 family protein"/>
    <property type="match status" value="1"/>
</dbReference>
<dbReference type="NCBIfam" id="NF003466">
    <property type="entry name" value="PRK05090.1"/>
    <property type="match status" value="1"/>
</dbReference>
<dbReference type="PANTHER" id="PTHR13420">
    <property type="entry name" value="UPF0235 PROTEIN C15ORF40"/>
    <property type="match status" value="1"/>
</dbReference>
<dbReference type="PANTHER" id="PTHR13420:SF7">
    <property type="entry name" value="UPF0235 PROTEIN C15ORF40"/>
    <property type="match status" value="1"/>
</dbReference>
<dbReference type="Pfam" id="PF02594">
    <property type="entry name" value="DUF167"/>
    <property type="match status" value="1"/>
</dbReference>
<dbReference type="SMART" id="SM01152">
    <property type="entry name" value="DUF167"/>
    <property type="match status" value="1"/>
</dbReference>
<dbReference type="SUPFAM" id="SSF69786">
    <property type="entry name" value="YggU-like"/>
    <property type="match status" value="1"/>
</dbReference>
<name>YGGU_SALG2</name>
<accession>B5RE62</accession>
<sequence>MSAVTRCEDGLVLRLYIQPKASRDSIVGLHGDEVKVAITAPPVDGQANSHLTKFLGKQFRVAKSQIVIEKGELGRHKQVKIIHPQQIPPEIAALTE</sequence>
<organism>
    <name type="scientific">Salmonella gallinarum (strain 287/91 / NCTC 13346)</name>
    <dbReference type="NCBI Taxonomy" id="550538"/>
    <lineage>
        <taxon>Bacteria</taxon>
        <taxon>Pseudomonadati</taxon>
        <taxon>Pseudomonadota</taxon>
        <taxon>Gammaproteobacteria</taxon>
        <taxon>Enterobacterales</taxon>
        <taxon>Enterobacteriaceae</taxon>
        <taxon>Salmonella</taxon>
    </lineage>
</organism>
<gene>
    <name evidence="1" type="primary">yggU</name>
    <name type="ordered locus">SG2996</name>
</gene>
<feature type="chain" id="PRO_1000130709" description="UPF0235 protein YggU">
    <location>
        <begin position="1"/>
        <end position="96"/>
    </location>
</feature>
<comment type="similarity">
    <text evidence="1">Belongs to the UPF0235 family.</text>
</comment>
<proteinExistence type="inferred from homology"/>
<protein>
    <recommendedName>
        <fullName evidence="1">UPF0235 protein YggU</fullName>
    </recommendedName>
</protein>
<reference key="1">
    <citation type="journal article" date="2008" name="Genome Res.">
        <title>Comparative genome analysis of Salmonella enteritidis PT4 and Salmonella gallinarum 287/91 provides insights into evolutionary and host adaptation pathways.</title>
        <authorList>
            <person name="Thomson N.R."/>
            <person name="Clayton D.J."/>
            <person name="Windhorst D."/>
            <person name="Vernikos G."/>
            <person name="Davidson S."/>
            <person name="Churcher C."/>
            <person name="Quail M.A."/>
            <person name="Stevens M."/>
            <person name="Jones M.A."/>
            <person name="Watson M."/>
            <person name="Barron A."/>
            <person name="Layton A."/>
            <person name="Pickard D."/>
            <person name="Kingsley R.A."/>
            <person name="Bignell A."/>
            <person name="Clark L."/>
            <person name="Harris B."/>
            <person name="Ormond D."/>
            <person name="Abdellah Z."/>
            <person name="Brooks K."/>
            <person name="Cherevach I."/>
            <person name="Chillingworth T."/>
            <person name="Woodward J."/>
            <person name="Norberczak H."/>
            <person name="Lord A."/>
            <person name="Arrowsmith C."/>
            <person name="Jagels K."/>
            <person name="Moule S."/>
            <person name="Mungall K."/>
            <person name="Saunders M."/>
            <person name="Whitehead S."/>
            <person name="Chabalgoity J.A."/>
            <person name="Maskell D."/>
            <person name="Humphreys T."/>
            <person name="Roberts M."/>
            <person name="Barrow P.A."/>
            <person name="Dougan G."/>
            <person name="Parkhill J."/>
        </authorList>
    </citation>
    <scope>NUCLEOTIDE SEQUENCE [LARGE SCALE GENOMIC DNA]</scope>
    <source>
        <strain>287/91 / NCTC 13346</strain>
    </source>
</reference>